<dbReference type="EMBL" id="AP009247">
    <property type="protein sequence ID" value="BAF62048.1"/>
    <property type="molecule type" value="Genomic_DNA"/>
</dbReference>
<dbReference type="RefSeq" id="WP_011930317.1">
    <property type="nucleotide sequence ID" value="NC_009465.1"/>
</dbReference>
<dbReference type="SMR" id="A5CVF9"/>
<dbReference type="STRING" id="412965.COSY_0949"/>
<dbReference type="KEGG" id="vok:COSY_0949"/>
<dbReference type="eggNOG" id="COG0711">
    <property type="taxonomic scope" value="Bacteria"/>
</dbReference>
<dbReference type="HOGENOM" id="CLU_079215_4_5_6"/>
<dbReference type="OrthoDB" id="9788020at2"/>
<dbReference type="Proteomes" id="UP000000247">
    <property type="component" value="Chromosome"/>
</dbReference>
<dbReference type="GO" id="GO:0005886">
    <property type="term" value="C:plasma membrane"/>
    <property type="evidence" value="ECO:0007669"/>
    <property type="project" value="UniProtKB-SubCell"/>
</dbReference>
<dbReference type="GO" id="GO:0045259">
    <property type="term" value="C:proton-transporting ATP synthase complex"/>
    <property type="evidence" value="ECO:0007669"/>
    <property type="project" value="UniProtKB-KW"/>
</dbReference>
<dbReference type="GO" id="GO:0046933">
    <property type="term" value="F:proton-transporting ATP synthase activity, rotational mechanism"/>
    <property type="evidence" value="ECO:0007669"/>
    <property type="project" value="UniProtKB-UniRule"/>
</dbReference>
<dbReference type="GO" id="GO:0046961">
    <property type="term" value="F:proton-transporting ATPase activity, rotational mechanism"/>
    <property type="evidence" value="ECO:0007669"/>
    <property type="project" value="TreeGrafter"/>
</dbReference>
<dbReference type="CDD" id="cd06503">
    <property type="entry name" value="ATP-synt_Fo_b"/>
    <property type="match status" value="1"/>
</dbReference>
<dbReference type="Gene3D" id="6.10.250.1580">
    <property type="match status" value="1"/>
</dbReference>
<dbReference type="HAMAP" id="MF_01398">
    <property type="entry name" value="ATP_synth_b_bprime"/>
    <property type="match status" value="1"/>
</dbReference>
<dbReference type="InterPro" id="IPR028987">
    <property type="entry name" value="ATP_synth_B-like_membr_sf"/>
</dbReference>
<dbReference type="InterPro" id="IPR002146">
    <property type="entry name" value="ATP_synth_b/b'su_bac/chlpt"/>
</dbReference>
<dbReference type="InterPro" id="IPR005864">
    <property type="entry name" value="ATP_synth_F0_bsu_bac"/>
</dbReference>
<dbReference type="InterPro" id="IPR050059">
    <property type="entry name" value="ATP_synthase_B_chain"/>
</dbReference>
<dbReference type="NCBIfam" id="TIGR01144">
    <property type="entry name" value="ATP_synt_b"/>
    <property type="match status" value="1"/>
</dbReference>
<dbReference type="NCBIfam" id="NF004411">
    <property type="entry name" value="PRK05759.1-2"/>
    <property type="match status" value="1"/>
</dbReference>
<dbReference type="PANTHER" id="PTHR33445:SF1">
    <property type="entry name" value="ATP SYNTHASE SUBUNIT B"/>
    <property type="match status" value="1"/>
</dbReference>
<dbReference type="PANTHER" id="PTHR33445">
    <property type="entry name" value="ATP SYNTHASE SUBUNIT B', CHLOROPLASTIC"/>
    <property type="match status" value="1"/>
</dbReference>
<dbReference type="Pfam" id="PF00430">
    <property type="entry name" value="ATP-synt_B"/>
    <property type="match status" value="1"/>
</dbReference>
<dbReference type="SUPFAM" id="SSF81573">
    <property type="entry name" value="F1F0 ATP synthase subunit B, membrane domain"/>
    <property type="match status" value="1"/>
</dbReference>
<keyword id="KW-0066">ATP synthesis</keyword>
<keyword id="KW-0997">Cell inner membrane</keyword>
<keyword id="KW-1003">Cell membrane</keyword>
<keyword id="KW-0138">CF(0)</keyword>
<keyword id="KW-0375">Hydrogen ion transport</keyword>
<keyword id="KW-0406">Ion transport</keyword>
<keyword id="KW-0472">Membrane</keyword>
<keyword id="KW-1185">Reference proteome</keyword>
<keyword id="KW-0812">Transmembrane</keyword>
<keyword id="KW-1133">Transmembrane helix</keyword>
<keyword id="KW-0813">Transport</keyword>
<reference key="1">
    <citation type="journal article" date="2007" name="Curr. Biol.">
        <title>Reduced genome of the thioautotrophic intracellular symbiont in a deep-sea clam, Calyptogena okutanii.</title>
        <authorList>
            <person name="Kuwahara H."/>
            <person name="Yoshida T."/>
            <person name="Takaki Y."/>
            <person name="Shimamura S."/>
            <person name="Nishi S."/>
            <person name="Harada M."/>
            <person name="Matsuyama K."/>
            <person name="Takishita K."/>
            <person name="Kawato M."/>
            <person name="Uematsu K."/>
            <person name="Fujiwara Y."/>
            <person name="Sato T."/>
            <person name="Kato C."/>
            <person name="Kitagawa M."/>
            <person name="Kato I."/>
            <person name="Maruyama T."/>
        </authorList>
    </citation>
    <scope>NUCLEOTIDE SEQUENCE [LARGE SCALE GENOMIC DNA]</scope>
    <source>
        <strain>HA</strain>
    </source>
</reference>
<evidence type="ECO:0000255" key="1">
    <source>
        <dbReference type="HAMAP-Rule" id="MF_01398"/>
    </source>
</evidence>
<gene>
    <name evidence="1" type="primary">atpF</name>
    <name type="ordered locus">COSY_0949</name>
</gene>
<feature type="chain" id="PRO_0000368855" description="ATP synthase subunit b">
    <location>
        <begin position="1"/>
        <end position="157"/>
    </location>
</feature>
<feature type="transmembrane region" description="Helical" evidence="1">
    <location>
        <begin position="11"/>
        <end position="31"/>
    </location>
</feature>
<sequence length="157" mass="17743">MNINLTMFGQLIMFAMFTWFCMKFIWPPIVMAMEERQKRIEGGLLAAERGRFEKAEAQIKAKEIINQSKSLAAEIIANATRQALNMVEDAKYIALKEAGKVKEQAQAQLEQDTICVRNELKNQVSDLVIQGVNAVLDKEVDVKLHQQMLGKLSESLS</sequence>
<organism>
    <name type="scientific">Vesicomyosocius okutanii subsp. Calyptogena okutanii (strain HA)</name>
    <dbReference type="NCBI Taxonomy" id="412965"/>
    <lineage>
        <taxon>Bacteria</taxon>
        <taxon>Pseudomonadati</taxon>
        <taxon>Pseudomonadota</taxon>
        <taxon>Gammaproteobacteria</taxon>
        <taxon>Candidatus Pseudothioglobaceae</taxon>
        <taxon>Candidatus Vesicomyosocius</taxon>
    </lineage>
</organism>
<protein>
    <recommendedName>
        <fullName evidence="1">ATP synthase subunit b</fullName>
    </recommendedName>
    <alternativeName>
        <fullName evidence="1">ATP synthase F(0) sector subunit b</fullName>
    </alternativeName>
    <alternativeName>
        <fullName evidence="1">ATPase subunit I</fullName>
    </alternativeName>
    <alternativeName>
        <fullName evidence="1">F-type ATPase subunit b</fullName>
        <shortName evidence="1">F-ATPase subunit b</shortName>
    </alternativeName>
</protein>
<accession>A5CVF9</accession>
<proteinExistence type="inferred from homology"/>
<name>ATPF_VESOH</name>
<comment type="function">
    <text evidence="1">F(1)F(0) ATP synthase produces ATP from ADP in the presence of a proton or sodium gradient. F-type ATPases consist of two structural domains, F(1) containing the extramembraneous catalytic core and F(0) containing the membrane proton channel, linked together by a central stalk and a peripheral stalk. During catalysis, ATP synthesis in the catalytic domain of F(1) is coupled via a rotary mechanism of the central stalk subunits to proton translocation.</text>
</comment>
<comment type="function">
    <text evidence="1">Component of the F(0) channel, it forms part of the peripheral stalk, linking F(1) to F(0).</text>
</comment>
<comment type="subunit">
    <text evidence="1">F-type ATPases have 2 components, F(1) - the catalytic core - and F(0) - the membrane proton channel. F(1) has five subunits: alpha(3), beta(3), gamma(1), delta(1), epsilon(1). F(0) has three main subunits: a(1), b(2) and c(10-14). The alpha and beta chains form an alternating ring which encloses part of the gamma chain. F(1) is attached to F(0) by a central stalk formed by the gamma and epsilon chains, while a peripheral stalk is formed by the delta and b chains.</text>
</comment>
<comment type="subcellular location">
    <subcellularLocation>
        <location evidence="1">Cell inner membrane</location>
        <topology evidence="1">Single-pass membrane protein</topology>
    </subcellularLocation>
</comment>
<comment type="similarity">
    <text evidence="1">Belongs to the ATPase B chain family.</text>
</comment>